<gene>
    <name evidence="1" type="primary">fluC1</name>
    <name type="synonym">crcB1</name>
    <name type="ordered locus">jk2058</name>
</gene>
<name>FLUC1_CORJK</name>
<proteinExistence type="inferred from homology"/>
<keyword id="KW-1003">Cell membrane</keyword>
<keyword id="KW-0407">Ion channel</keyword>
<keyword id="KW-0406">Ion transport</keyword>
<keyword id="KW-0472">Membrane</keyword>
<keyword id="KW-0479">Metal-binding</keyword>
<keyword id="KW-1185">Reference proteome</keyword>
<keyword id="KW-0915">Sodium</keyword>
<keyword id="KW-0812">Transmembrane</keyword>
<keyword id="KW-1133">Transmembrane helix</keyword>
<keyword id="KW-0813">Transport</keyword>
<reference key="1">
    <citation type="journal article" date="2005" name="J. Bacteriol.">
        <title>Complete genome sequence and analysis of the multiresistant nosocomial pathogen Corynebacterium jeikeium K411, a lipid-requiring bacterium of the human skin flora.</title>
        <authorList>
            <person name="Tauch A."/>
            <person name="Kaiser O."/>
            <person name="Hain T."/>
            <person name="Goesmann A."/>
            <person name="Weisshaar B."/>
            <person name="Albersmeier A."/>
            <person name="Bekel T."/>
            <person name="Bischoff N."/>
            <person name="Brune I."/>
            <person name="Chakraborty T."/>
            <person name="Kalinowski J."/>
            <person name="Meyer F."/>
            <person name="Rupp O."/>
            <person name="Schneiker S."/>
            <person name="Viehoever P."/>
            <person name="Puehler A."/>
        </authorList>
    </citation>
    <scope>NUCLEOTIDE SEQUENCE [LARGE SCALE GENOMIC DNA]</scope>
    <source>
        <strain>K411</strain>
    </source>
</reference>
<feature type="chain" id="PRO_0000252870" description="Fluoride-specific ion channel FluC 1">
    <location>
        <begin position="1"/>
        <end position="140"/>
    </location>
</feature>
<feature type="transmembrane region" description="Helical" evidence="3">
    <location>
        <begin position="3"/>
        <end position="23"/>
    </location>
</feature>
<feature type="transmembrane region" description="Helical" evidence="3">
    <location>
        <begin position="38"/>
        <end position="58"/>
    </location>
</feature>
<feature type="transmembrane region" description="Helical" evidence="3">
    <location>
        <begin position="80"/>
        <end position="100"/>
    </location>
</feature>
<feature type="transmembrane region" description="Helical" evidence="3">
    <location>
        <begin position="113"/>
        <end position="133"/>
    </location>
</feature>
<feature type="binding site" evidence="2">
    <location>
        <position position="91"/>
    </location>
    <ligand>
        <name>Na(+)</name>
        <dbReference type="ChEBI" id="CHEBI:29101"/>
        <note>structural</note>
    </ligand>
</feature>
<feature type="binding site" evidence="2">
    <location>
        <position position="94"/>
    </location>
    <ligand>
        <name>Na(+)</name>
        <dbReference type="ChEBI" id="CHEBI:29101"/>
        <note>structural</note>
    </ligand>
</feature>
<sequence>MNTGATLIELLAVALGGGTGAAARYVLDTHLKSKHGWAPLWSLAVVNLLGTVVLGLVLGYTSQHLDGAAGSTSAGETQDILYPLLGIGLAGGFTTFSTVMVEVFTRPQPARRIAGVVGMAVVCCAVFLPALWCGALLAGA</sequence>
<accession>Q4JSG7</accession>
<dbReference type="EMBL" id="CR931997">
    <property type="protein sequence ID" value="CAI38240.1"/>
    <property type="molecule type" value="Genomic_DNA"/>
</dbReference>
<dbReference type="RefSeq" id="WP_005292462.1">
    <property type="nucleotide sequence ID" value="NC_007164.1"/>
</dbReference>
<dbReference type="SMR" id="Q4JSG7"/>
<dbReference type="STRING" id="306537.jk2058"/>
<dbReference type="GeneID" id="92739691"/>
<dbReference type="KEGG" id="cjk:jk2058"/>
<dbReference type="eggNOG" id="ENOG5032DWT">
    <property type="taxonomic scope" value="Bacteria"/>
</dbReference>
<dbReference type="HOGENOM" id="CLU_114342_2_0_11"/>
<dbReference type="OrthoDB" id="4408652at2"/>
<dbReference type="Proteomes" id="UP000000545">
    <property type="component" value="Chromosome"/>
</dbReference>
<dbReference type="GO" id="GO:0005886">
    <property type="term" value="C:plasma membrane"/>
    <property type="evidence" value="ECO:0007669"/>
    <property type="project" value="UniProtKB-SubCell"/>
</dbReference>
<dbReference type="GO" id="GO:0046872">
    <property type="term" value="F:metal ion binding"/>
    <property type="evidence" value="ECO:0007669"/>
    <property type="project" value="UniProtKB-KW"/>
</dbReference>
<dbReference type="GO" id="GO:0034220">
    <property type="term" value="P:monoatomic ion transmembrane transport"/>
    <property type="evidence" value="ECO:0007669"/>
    <property type="project" value="UniProtKB-KW"/>
</dbReference>
<dbReference type="InterPro" id="IPR003691">
    <property type="entry name" value="FluC"/>
</dbReference>
<dbReference type="Pfam" id="PF02537">
    <property type="entry name" value="CRCB"/>
    <property type="match status" value="1"/>
</dbReference>
<organism>
    <name type="scientific">Corynebacterium jeikeium (strain K411)</name>
    <dbReference type="NCBI Taxonomy" id="306537"/>
    <lineage>
        <taxon>Bacteria</taxon>
        <taxon>Bacillati</taxon>
        <taxon>Actinomycetota</taxon>
        <taxon>Actinomycetes</taxon>
        <taxon>Mycobacteriales</taxon>
        <taxon>Corynebacteriaceae</taxon>
        <taxon>Corynebacterium</taxon>
    </lineage>
</organism>
<evidence type="ECO:0000250" key="1">
    <source>
        <dbReference type="UniProtKB" id="P37002"/>
    </source>
</evidence>
<evidence type="ECO:0000250" key="2">
    <source>
        <dbReference type="UniProtKB" id="Q7VYU0"/>
    </source>
</evidence>
<evidence type="ECO:0000255" key="3"/>
<evidence type="ECO:0000305" key="4"/>
<comment type="function">
    <text evidence="1">Fluoride-specific ion channel. Important for reducing fluoride concentration in the cell, thus reducing its toxicity.</text>
</comment>
<comment type="catalytic activity">
    <reaction evidence="1">
        <text>fluoride(in) = fluoride(out)</text>
        <dbReference type="Rhea" id="RHEA:76159"/>
        <dbReference type="ChEBI" id="CHEBI:17051"/>
    </reaction>
    <physiologicalReaction direction="left-to-right" evidence="1">
        <dbReference type="Rhea" id="RHEA:76160"/>
    </physiologicalReaction>
</comment>
<comment type="activity regulation">
    <text evidence="2">Na(+) is not transported, but it plays an essential structural role and its presence is essential for fluoride channel function.</text>
</comment>
<comment type="subcellular location">
    <subcellularLocation>
        <location evidence="4">Cell membrane</location>
        <topology evidence="3">Multi-pass membrane protein</topology>
    </subcellularLocation>
</comment>
<comment type="similarity">
    <text evidence="4">Belongs to the fluoride channel Fluc/FEX (TC 1.A.43) family.</text>
</comment>
<protein>
    <recommendedName>
        <fullName evidence="1">Fluoride-specific ion channel FluC 1</fullName>
    </recommendedName>
</protein>